<protein>
    <recommendedName>
        <fullName evidence="1">Photosystem I assembly protein Ycf3</fullName>
    </recommendedName>
</protein>
<reference key="1">
    <citation type="journal article" date="2008" name="PLoS ONE">
        <title>An optimized chloroplast DNA extraction protocol for grasses (Poaceae) proves suitable for whole plastid genome sequencing and SNP detection.</title>
        <authorList>
            <person name="Diekmann K."/>
            <person name="Hodkinson T.R."/>
            <person name="Fricke E."/>
            <person name="Barth S."/>
        </authorList>
    </citation>
    <scope>NUCLEOTIDE SEQUENCE [LARGE SCALE GENOMIC DNA]</scope>
    <source>
        <strain>cv. Cashel</strain>
    </source>
</reference>
<sequence>MPRSRANGNFIDKTSSIVANILLRIIPTTSGEKKAFTYYRDGMLAQSEGNYAEALQNYYEATRLEIDPYDRSYILYNIGLIHTSNGEHTKALEYYFRALERNPFLPQAFNNMAVICHYRGEQAILQGDSEIAEAWFDQAAEYWKQAIALTPGNYIEAQNWLKITKRFEFE</sequence>
<geneLocation type="chloroplast"/>
<feature type="chain" id="PRO_0000325068" description="Photosystem I assembly protein Ycf3">
    <location>
        <begin position="1"/>
        <end position="170"/>
    </location>
</feature>
<feature type="repeat" description="TPR 1">
    <location>
        <begin position="35"/>
        <end position="68"/>
    </location>
</feature>
<feature type="repeat" description="TPR 2">
    <location>
        <begin position="72"/>
        <end position="105"/>
    </location>
</feature>
<feature type="repeat" description="TPR 3">
    <location>
        <begin position="120"/>
        <end position="153"/>
    </location>
</feature>
<dbReference type="EMBL" id="AM777385">
    <property type="protein sequence ID" value="CAO85977.1"/>
    <property type="molecule type" value="Genomic_DNA"/>
</dbReference>
<dbReference type="RefSeq" id="YP_001531284.1">
    <property type="nucleotide sequence ID" value="NC_009950.1"/>
</dbReference>
<dbReference type="SMR" id="A8Y9H1"/>
<dbReference type="GeneID" id="5696560"/>
<dbReference type="KEGG" id="lper:5696560"/>
<dbReference type="GO" id="GO:0009535">
    <property type="term" value="C:chloroplast thylakoid membrane"/>
    <property type="evidence" value="ECO:0007669"/>
    <property type="project" value="UniProtKB-SubCell"/>
</dbReference>
<dbReference type="GO" id="GO:0015979">
    <property type="term" value="P:photosynthesis"/>
    <property type="evidence" value="ECO:0007669"/>
    <property type="project" value="UniProtKB-UniRule"/>
</dbReference>
<dbReference type="FunFam" id="1.25.40.10:FF:000004">
    <property type="entry name" value="Photosystem I assembly protein Ycf3"/>
    <property type="match status" value="1"/>
</dbReference>
<dbReference type="Gene3D" id="1.25.40.10">
    <property type="entry name" value="Tetratricopeptide repeat domain"/>
    <property type="match status" value="1"/>
</dbReference>
<dbReference type="HAMAP" id="MF_00439">
    <property type="entry name" value="Ycf3"/>
    <property type="match status" value="1"/>
</dbReference>
<dbReference type="InterPro" id="IPR022818">
    <property type="entry name" value="PSI_Ycf3_assembly"/>
</dbReference>
<dbReference type="InterPro" id="IPR011990">
    <property type="entry name" value="TPR-like_helical_dom_sf"/>
</dbReference>
<dbReference type="InterPro" id="IPR019734">
    <property type="entry name" value="TPR_rpt"/>
</dbReference>
<dbReference type="InterPro" id="IPR051685">
    <property type="entry name" value="Ycf3/AcsC/BcsC/TPR_MFPF"/>
</dbReference>
<dbReference type="NCBIfam" id="NF002725">
    <property type="entry name" value="PRK02603.1"/>
    <property type="match status" value="1"/>
</dbReference>
<dbReference type="PANTHER" id="PTHR44943">
    <property type="entry name" value="CELLULOSE SYNTHASE OPERON PROTEIN C"/>
    <property type="match status" value="1"/>
</dbReference>
<dbReference type="PANTHER" id="PTHR44943:SF8">
    <property type="entry name" value="TPR REPEAT-CONTAINING PROTEIN MJ0263"/>
    <property type="match status" value="1"/>
</dbReference>
<dbReference type="Pfam" id="PF00515">
    <property type="entry name" value="TPR_1"/>
    <property type="match status" value="1"/>
</dbReference>
<dbReference type="SMART" id="SM00028">
    <property type="entry name" value="TPR"/>
    <property type="match status" value="3"/>
</dbReference>
<dbReference type="SUPFAM" id="SSF48452">
    <property type="entry name" value="TPR-like"/>
    <property type="match status" value="1"/>
</dbReference>
<dbReference type="PROSITE" id="PS50005">
    <property type="entry name" value="TPR"/>
    <property type="match status" value="3"/>
</dbReference>
<dbReference type="PROSITE" id="PS50293">
    <property type="entry name" value="TPR_REGION"/>
    <property type="match status" value="1"/>
</dbReference>
<gene>
    <name evidence="1" type="primary">ycf3</name>
    <name type="ordered locus">LopeCp035</name>
</gene>
<name>YCF3_LOLPR</name>
<proteinExistence type="inferred from homology"/>
<organism>
    <name type="scientific">Lolium perenne</name>
    <name type="common">Perennial ryegrass</name>
    <dbReference type="NCBI Taxonomy" id="4522"/>
    <lineage>
        <taxon>Eukaryota</taxon>
        <taxon>Viridiplantae</taxon>
        <taxon>Streptophyta</taxon>
        <taxon>Embryophyta</taxon>
        <taxon>Tracheophyta</taxon>
        <taxon>Spermatophyta</taxon>
        <taxon>Magnoliopsida</taxon>
        <taxon>Liliopsida</taxon>
        <taxon>Poales</taxon>
        <taxon>Poaceae</taxon>
        <taxon>BOP clade</taxon>
        <taxon>Pooideae</taxon>
        <taxon>Poodae</taxon>
        <taxon>Poeae</taxon>
        <taxon>Poeae Chloroplast Group 2 (Poeae type)</taxon>
        <taxon>Loliodinae</taxon>
        <taxon>Loliinae</taxon>
        <taxon>Lolium</taxon>
    </lineage>
</organism>
<accession>A8Y9H1</accession>
<comment type="function">
    <text evidence="1">Essential for the assembly of the photosystem I (PSI) complex. May act as a chaperone-like factor to guide the assembly of the PSI subunits.</text>
</comment>
<comment type="subcellular location">
    <subcellularLocation>
        <location evidence="1">Plastid</location>
        <location evidence="1">Chloroplast thylakoid membrane</location>
        <topology evidence="1">Peripheral membrane protein</topology>
    </subcellularLocation>
</comment>
<comment type="similarity">
    <text evidence="1">Belongs to the Ycf3 family.</text>
</comment>
<keyword id="KW-0150">Chloroplast</keyword>
<keyword id="KW-0472">Membrane</keyword>
<keyword id="KW-0602">Photosynthesis</keyword>
<keyword id="KW-0934">Plastid</keyword>
<keyword id="KW-0677">Repeat</keyword>
<keyword id="KW-0793">Thylakoid</keyword>
<keyword id="KW-0802">TPR repeat</keyword>
<evidence type="ECO:0000255" key="1">
    <source>
        <dbReference type="HAMAP-Rule" id="MF_00439"/>
    </source>
</evidence>